<reference key="1">
    <citation type="submission" date="2007-06" db="EMBL/GenBank/DDBJ databases">
        <title>Complete sequence of Sinorhizobium medicae WSM419 chromosome.</title>
        <authorList>
            <consortium name="US DOE Joint Genome Institute"/>
            <person name="Copeland A."/>
            <person name="Lucas S."/>
            <person name="Lapidus A."/>
            <person name="Barry K."/>
            <person name="Glavina del Rio T."/>
            <person name="Dalin E."/>
            <person name="Tice H."/>
            <person name="Pitluck S."/>
            <person name="Chain P."/>
            <person name="Malfatti S."/>
            <person name="Shin M."/>
            <person name="Vergez L."/>
            <person name="Schmutz J."/>
            <person name="Larimer F."/>
            <person name="Land M."/>
            <person name="Hauser L."/>
            <person name="Kyrpides N."/>
            <person name="Mikhailova N."/>
            <person name="Reeve W.G."/>
            <person name="Richardson P."/>
        </authorList>
    </citation>
    <scope>NUCLEOTIDE SEQUENCE [LARGE SCALE GENOMIC DNA]</scope>
    <source>
        <strain>WSM419</strain>
    </source>
</reference>
<keyword id="KW-0963">Cytoplasm</keyword>
<keyword id="KW-0227">DNA damage</keyword>
<keyword id="KW-0233">DNA recombination</keyword>
<keyword id="KW-0234">DNA repair</keyword>
<keyword id="KW-0238">DNA-binding</keyword>
<keyword id="KW-0255">Endonuclease</keyword>
<keyword id="KW-0378">Hydrolase</keyword>
<keyword id="KW-0460">Magnesium</keyword>
<keyword id="KW-0479">Metal-binding</keyword>
<keyword id="KW-0540">Nuclease</keyword>
<name>RUVC_SINMW</name>
<comment type="function">
    <text evidence="1">The RuvA-RuvB-RuvC complex processes Holliday junction (HJ) DNA during genetic recombination and DNA repair. Endonuclease that resolves HJ intermediates. Cleaves cruciform DNA by making single-stranded nicks across the HJ at symmetrical positions within the homologous arms, yielding a 5'-phosphate and a 3'-hydroxyl group; requires a central core of homology in the junction. The consensus cleavage sequence is 5'-(A/T)TT(C/G)-3'. Cleavage occurs on the 3'-side of the TT dinucleotide at the point of strand exchange. HJ branch migration catalyzed by RuvA-RuvB allows RuvC to scan DNA until it finds its consensus sequence, where it cleaves and resolves the cruciform DNA.</text>
</comment>
<comment type="catalytic activity">
    <reaction evidence="1">
        <text>Endonucleolytic cleavage at a junction such as a reciprocal single-stranded crossover between two homologous DNA duplexes (Holliday junction).</text>
        <dbReference type="EC" id="3.1.21.10"/>
    </reaction>
</comment>
<comment type="cofactor">
    <cofactor evidence="1">
        <name>Mg(2+)</name>
        <dbReference type="ChEBI" id="CHEBI:18420"/>
    </cofactor>
    <text evidence="1">Binds 2 Mg(2+) ion per subunit.</text>
</comment>
<comment type="subunit">
    <text evidence="1">Homodimer which binds Holliday junction (HJ) DNA. The HJ becomes 2-fold symmetrical on binding to RuvC with unstacked arms; it has a different conformation from HJ DNA in complex with RuvA. In the full resolvosome a probable DNA-RuvA(4)-RuvB(12)-RuvC(2) complex forms which resolves the HJ.</text>
</comment>
<comment type="subcellular location">
    <subcellularLocation>
        <location evidence="1">Cytoplasm</location>
    </subcellularLocation>
</comment>
<comment type="similarity">
    <text evidence="1">Belongs to the RuvC family.</text>
</comment>
<evidence type="ECO:0000255" key="1">
    <source>
        <dbReference type="HAMAP-Rule" id="MF_00034"/>
    </source>
</evidence>
<proteinExistence type="inferred from homology"/>
<dbReference type="EC" id="3.1.21.10" evidence="1"/>
<dbReference type="EMBL" id="CP000738">
    <property type="protein sequence ID" value="ABR61469.1"/>
    <property type="molecule type" value="Genomic_DNA"/>
</dbReference>
<dbReference type="RefSeq" id="YP_001328304.1">
    <property type="nucleotide sequence ID" value="NC_009636.1"/>
</dbReference>
<dbReference type="SMR" id="A6UCT9"/>
<dbReference type="STRING" id="366394.Smed_2639"/>
<dbReference type="KEGG" id="smd:Smed_2639"/>
<dbReference type="PATRIC" id="fig|366394.8.peg.5837"/>
<dbReference type="eggNOG" id="COG0817">
    <property type="taxonomic scope" value="Bacteria"/>
</dbReference>
<dbReference type="HOGENOM" id="CLU_091257_1_0_5"/>
<dbReference type="OrthoDB" id="9805499at2"/>
<dbReference type="Proteomes" id="UP000001108">
    <property type="component" value="Chromosome"/>
</dbReference>
<dbReference type="GO" id="GO:0005737">
    <property type="term" value="C:cytoplasm"/>
    <property type="evidence" value="ECO:0007669"/>
    <property type="project" value="UniProtKB-SubCell"/>
</dbReference>
<dbReference type="GO" id="GO:0048476">
    <property type="term" value="C:Holliday junction resolvase complex"/>
    <property type="evidence" value="ECO:0007669"/>
    <property type="project" value="UniProtKB-UniRule"/>
</dbReference>
<dbReference type="GO" id="GO:0008821">
    <property type="term" value="F:crossover junction DNA endonuclease activity"/>
    <property type="evidence" value="ECO:0007669"/>
    <property type="project" value="UniProtKB-UniRule"/>
</dbReference>
<dbReference type="GO" id="GO:0003677">
    <property type="term" value="F:DNA binding"/>
    <property type="evidence" value="ECO:0007669"/>
    <property type="project" value="UniProtKB-KW"/>
</dbReference>
<dbReference type="GO" id="GO:0000287">
    <property type="term" value="F:magnesium ion binding"/>
    <property type="evidence" value="ECO:0007669"/>
    <property type="project" value="UniProtKB-UniRule"/>
</dbReference>
<dbReference type="GO" id="GO:0006310">
    <property type="term" value="P:DNA recombination"/>
    <property type="evidence" value="ECO:0007669"/>
    <property type="project" value="UniProtKB-UniRule"/>
</dbReference>
<dbReference type="GO" id="GO:0006281">
    <property type="term" value="P:DNA repair"/>
    <property type="evidence" value="ECO:0007669"/>
    <property type="project" value="UniProtKB-UniRule"/>
</dbReference>
<dbReference type="CDD" id="cd16962">
    <property type="entry name" value="RuvC"/>
    <property type="match status" value="1"/>
</dbReference>
<dbReference type="FunFam" id="3.30.420.10:FF:000002">
    <property type="entry name" value="Crossover junction endodeoxyribonuclease RuvC"/>
    <property type="match status" value="1"/>
</dbReference>
<dbReference type="Gene3D" id="3.30.420.10">
    <property type="entry name" value="Ribonuclease H-like superfamily/Ribonuclease H"/>
    <property type="match status" value="1"/>
</dbReference>
<dbReference type="HAMAP" id="MF_00034">
    <property type="entry name" value="RuvC"/>
    <property type="match status" value="1"/>
</dbReference>
<dbReference type="InterPro" id="IPR012337">
    <property type="entry name" value="RNaseH-like_sf"/>
</dbReference>
<dbReference type="InterPro" id="IPR036397">
    <property type="entry name" value="RNaseH_sf"/>
</dbReference>
<dbReference type="InterPro" id="IPR020563">
    <property type="entry name" value="X-over_junc_endoDNase_Mg_BS"/>
</dbReference>
<dbReference type="InterPro" id="IPR002176">
    <property type="entry name" value="X-over_junc_endoDNase_RuvC"/>
</dbReference>
<dbReference type="NCBIfam" id="TIGR00228">
    <property type="entry name" value="ruvC"/>
    <property type="match status" value="1"/>
</dbReference>
<dbReference type="PANTHER" id="PTHR30194">
    <property type="entry name" value="CROSSOVER JUNCTION ENDODEOXYRIBONUCLEASE RUVC"/>
    <property type="match status" value="1"/>
</dbReference>
<dbReference type="PANTHER" id="PTHR30194:SF3">
    <property type="entry name" value="CROSSOVER JUNCTION ENDODEOXYRIBONUCLEASE RUVC"/>
    <property type="match status" value="1"/>
</dbReference>
<dbReference type="Pfam" id="PF02075">
    <property type="entry name" value="RuvC"/>
    <property type="match status" value="1"/>
</dbReference>
<dbReference type="PRINTS" id="PR00696">
    <property type="entry name" value="RSOLVASERUVC"/>
</dbReference>
<dbReference type="SUPFAM" id="SSF53098">
    <property type="entry name" value="Ribonuclease H-like"/>
    <property type="match status" value="1"/>
</dbReference>
<dbReference type="PROSITE" id="PS01321">
    <property type="entry name" value="RUVC"/>
    <property type="match status" value="1"/>
</dbReference>
<organism>
    <name type="scientific">Sinorhizobium medicae (strain WSM419)</name>
    <name type="common">Ensifer medicae</name>
    <dbReference type="NCBI Taxonomy" id="366394"/>
    <lineage>
        <taxon>Bacteria</taxon>
        <taxon>Pseudomonadati</taxon>
        <taxon>Pseudomonadota</taxon>
        <taxon>Alphaproteobacteria</taxon>
        <taxon>Hyphomicrobiales</taxon>
        <taxon>Rhizobiaceae</taxon>
        <taxon>Sinorhizobium/Ensifer group</taxon>
        <taxon>Sinorhizobium</taxon>
    </lineage>
</organism>
<sequence>MIRIIGVDPGLRRTGWGIIETLGNSLRFIASGTITSDGDMDLASRLCQLHDGLAEVVHSYQPHEAAVEQTFVNKDATATLKLGQARGIAMLVPARAGLRVAEYAPNAVKKAVIGVGHGEKQQIHMMLKVLMPKAEFKGNDAADALAIAICHAHNRQAITSRLAALAG</sequence>
<feature type="chain" id="PRO_0000332440" description="Crossover junction endodeoxyribonuclease RuvC">
    <location>
        <begin position="1"/>
        <end position="167"/>
    </location>
</feature>
<feature type="active site" evidence="1">
    <location>
        <position position="8"/>
    </location>
</feature>
<feature type="active site" evidence="1">
    <location>
        <position position="68"/>
    </location>
</feature>
<feature type="active site" evidence="1">
    <location>
        <position position="140"/>
    </location>
</feature>
<feature type="binding site" evidence="1">
    <location>
        <position position="8"/>
    </location>
    <ligand>
        <name>Mg(2+)</name>
        <dbReference type="ChEBI" id="CHEBI:18420"/>
        <label>1</label>
    </ligand>
</feature>
<feature type="binding site" evidence="1">
    <location>
        <position position="68"/>
    </location>
    <ligand>
        <name>Mg(2+)</name>
        <dbReference type="ChEBI" id="CHEBI:18420"/>
        <label>2</label>
    </ligand>
</feature>
<feature type="binding site" evidence="1">
    <location>
        <position position="140"/>
    </location>
    <ligand>
        <name>Mg(2+)</name>
        <dbReference type="ChEBI" id="CHEBI:18420"/>
        <label>1</label>
    </ligand>
</feature>
<gene>
    <name evidence="1" type="primary">ruvC</name>
    <name type="ordered locus">Smed_2639</name>
</gene>
<accession>A6UCT9</accession>
<protein>
    <recommendedName>
        <fullName evidence="1">Crossover junction endodeoxyribonuclease RuvC</fullName>
        <ecNumber evidence="1">3.1.21.10</ecNumber>
    </recommendedName>
    <alternativeName>
        <fullName evidence="1">Holliday junction nuclease RuvC</fullName>
    </alternativeName>
    <alternativeName>
        <fullName evidence="1">Holliday junction resolvase RuvC</fullName>
    </alternativeName>
</protein>